<evidence type="ECO:0000255" key="1"/>
<evidence type="ECO:0000269" key="2">
    <source>
    </source>
</evidence>
<evidence type="ECO:0000269" key="3">
    <source>
    </source>
</evidence>
<evidence type="ECO:0000269" key="4">
    <source>
    </source>
</evidence>
<evidence type="ECO:0000269" key="5">
    <source>
    </source>
</evidence>
<evidence type="ECO:0000269" key="6">
    <source>
    </source>
</evidence>
<evidence type="ECO:0000269" key="7">
    <source>
    </source>
</evidence>
<evidence type="ECO:0000269" key="8">
    <source>
    </source>
</evidence>
<evidence type="ECO:0000269" key="9">
    <source>
    </source>
</evidence>
<evidence type="ECO:0000269" key="10">
    <source>
    </source>
</evidence>
<evidence type="ECO:0000269" key="11">
    <source>
    </source>
</evidence>
<evidence type="ECO:0000269" key="12">
    <source>
    </source>
</evidence>
<evidence type="ECO:0000269" key="13">
    <source>
    </source>
</evidence>
<evidence type="ECO:0000269" key="14">
    <source>
    </source>
</evidence>
<evidence type="ECO:0000269" key="15">
    <source>
    </source>
</evidence>
<evidence type="ECO:0000269" key="16">
    <source>
    </source>
</evidence>
<evidence type="ECO:0000269" key="17">
    <source ref="4"/>
</evidence>
<evidence type="ECO:0000269" key="18">
    <source ref="5"/>
</evidence>
<evidence type="ECO:0000303" key="19">
    <source>
    </source>
</evidence>
<evidence type="ECO:0000303" key="20">
    <source>
    </source>
</evidence>
<evidence type="ECO:0000303" key="21">
    <source ref="4"/>
</evidence>
<evidence type="ECO:0000305" key="22"/>
<evidence type="ECO:0000305" key="23">
    <source>
    </source>
</evidence>
<evidence type="ECO:0000305" key="24">
    <source>
    </source>
</evidence>
<evidence type="ECO:0000305" key="25">
    <source ref="5"/>
</evidence>
<evidence type="ECO:0000312" key="26">
    <source>
        <dbReference type="SGD" id="S000004912"/>
    </source>
</evidence>
<evidence type="ECO:0007829" key="27">
    <source>
        <dbReference type="PDB" id="1CPY"/>
    </source>
</evidence>
<evidence type="ECO:0007829" key="28">
    <source>
        <dbReference type="PDB" id="1WPX"/>
    </source>
</evidence>
<evidence type="ECO:0007829" key="29">
    <source>
        <dbReference type="PDB" id="1YSC"/>
    </source>
</evidence>
<comment type="function">
    <text evidence="5 6 11 16">Vacuolar serine-type carboxypeptidase involved in degradation of small peptides (PubMed:8679540). Digests preferentially peptides containing an aliphatic or hydrophobic residue in P1' position, as well as methionine, leucine or phenylalanine in P1 position of ester substrate (PubMed:8679540). Also plays a role in breakdown of the autophagic body and the autophagosome-dependent protein synthesis (PubMed:29514932). Plays a key role in phytochelatin (PC) synthesis from glutathione (GSH) by cleaving the Gly from GSH and form the PC-peptides of the structure (gamma-Glu-Cys)2-Gly (PubMed:17408619). Also involved in resistance to xenobiotics via the degradation of glutathione-S-conjugates (PubMed:19897216).</text>
</comment>
<comment type="catalytic activity">
    <reaction evidence="16">
        <text>Release of a C-terminal amino acid with broad specificity.</text>
        <dbReference type="EC" id="3.4.16.5"/>
    </reaction>
</comment>
<comment type="activity regulation">
    <text>Inhibited by ZPCK.</text>
</comment>
<comment type="biophysicochemical properties">
    <kinetics>
        <KM evidence="16">0.021 mM for furylacryloyl-Phe-Leu-OH</KM>
        <text evidence="16">kcat is 4900 min(-1) with furylacryloyl-Phe-Leu-OH as substrate.</text>
    </kinetics>
    <phDependence>
        <text evidence="16">Optimum pH is 6.5. Active from pH 4.5 to pH 8.5.</text>
    </phDependence>
    <temperatureDependence>
        <text evidence="8">Optimum temperature is 30 degrees Celsius.</text>
    </temperatureDependence>
</comment>
<comment type="interaction">
    <interactant intactId="EBI-4153">
        <id>P00729</id>
    </interactant>
    <interactant intactId="EBI-5761">
        <id>P38307</id>
        <label>DER1</label>
    </interactant>
    <organismsDiffer>false</organismsDiffer>
    <experiments>2</experiments>
</comment>
<comment type="interaction">
    <interactant intactId="EBI-4153">
        <id>P00729</id>
    </interactant>
    <interactant intactId="EBI-37613">
        <id>Q08109</id>
        <label>HRD1</label>
    </interactant>
    <organismsDiffer>false</organismsDiffer>
    <experiments>11</experiments>
</comment>
<comment type="interaction">
    <interactant intactId="EBI-4153">
        <id>P00729</id>
    </interactant>
    <interactant intactId="EBI-31647">
        <id>Q05787</id>
        <label>HRD3</label>
    </interactant>
    <organismsDiffer>false</organismsDiffer>
    <experiments>6</experiments>
</comment>
<comment type="interaction">
    <interactant intactId="EBI-4153">
        <id>P00729</id>
    </interactant>
    <interactant intactId="EBI-16400">
        <id>P32915</id>
        <label>SEC61</label>
    </interactant>
    <organismsDiffer>false</organismsDiffer>
    <experiments>4</experiments>
</comment>
<comment type="interaction">
    <interactant intactId="EBI-4153">
        <id>P00729</id>
    </interactant>
    <interactant intactId="EBI-5916">
        <id>P14306</id>
        <label>TFS1</label>
    </interactant>
    <organismsDiffer>false</organismsDiffer>
    <experiments>2</experiments>
</comment>
<comment type="interaction">
    <interactant intactId="EBI-4153">
        <id>P00729</id>
    </interactant>
    <interactant intactId="EBI-34938">
        <id>Q99220</id>
        <label>YOS9</label>
    </interactant>
    <organismsDiffer>false</organismsDiffer>
    <experiments>2</experiments>
</comment>
<comment type="subcellular location">
    <subcellularLocation>
        <location evidence="2 7 11">Vacuole lumen</location>
    </subcellularLocation>
    <text evidence="11">The vacuolar sorting receptor VPS10 is required for the delivery of ATG42 to the vacuole lumen.</text>
</comment>
<comment type="PTM">
    <text evidence="13">Enters the endoplasmic reticulum as an inactive zymogen and is modified by four N-linked core oligosaccharides, giving rise to a precursor known as P1 (67 kDa). As P1 transits through the Golgi, extension of its core oligosaccharides leads to the Golgi-modified P2 precursor (69 kDa). P2 is sorted away from secretory proteins at or beyond a late Golgi compartment and is subsequently delivered to the vacuole via a prevacuolar endosome-like compartment. Upon arrival in the vacuole, the N-terminal prosegment of P2 is cleaved by vacuolar proteases to yield the enzymatically active mature vacuolar form of CPY (61 kDa).</text>
</comment>
<comment type="PTM">
    <text evidence="10">The four high mannose core N-glycans found in mature CPY are Man(11-15)GlcNAc(2) at Asn-124, Man(8-12)GlcNAc(2) at Asn-198, Man(9-14)GlcNAc(2) at Asn-279 and phosphorylated Man(12-17)GlcNAc(2) as well as Man(11-16)GlcNAc(2) at Asn-479.</text>
</comment>
<comment type="disruption phenotype">
    <text evidence="5 6 11">Leads to vacuolar defects as well as defects in the terminal steps of autophagy, when ATG42 is also deleted (PubMed:29514932). The PCR1/ATG42 double deletion also abrogates the production of phytochelatin and the degradation of glutathione-S-conjugates (PubMed:17408619, PubMed:19897216).</text>
</comment>
<comment type="miscellaneous">
    <text evidence="3">Present with 44000 molecules/cell in log phase SD medium.</text>
</comment>
<comment type="similarity">
    <text evidence="22">Belongs to the peptidase S10 family.</text>
</comment>
<comment type="online information" name="Worthington enzyme manual">
    <link uri="https://www.worthington-biochem.com/COY/"/>
</comment>
<feature type="signal peptide" evidence="1">
    <location>
        <begin position="1"/>
        <end position="20"/>
    </location>
</feature>
<feature type="propeptide" id="PRO_0000004293" description="Mediates translocation across the endoplasmic reticulum, renders the enzyme inactive during transit, and targets the molecule to the vacuole" evidence="17 23">
    <location>
        <begin position="21"/>
        <end position="111"/>
    </location>
</feature>
<feature type="chain" id="PRO_0000004294" description="Carboxypeptidase Y">
    <location>
        <begin position="112"/>
        <end position="532"/>
    </location>
</feature>
<feature type="short sequence motif" description="Vacuolar targeting signal" evidence="12">
    <location>
        <begin position="24"/>
        <end position="27"/>
    </location>
</feature>
<feature type="active site" evidence="14 18">
    <location>
        <position position="257"/>
    </location>
</feature>
<feature type="active site" evidence="24">
    <location>
        <position position="449"/>
    </location>
</feature>
<feature type="active site" evidence="9 24">
    <location>
        <position position="508"/>
    </location>
</feature>
<feature type="binding site" evidence="25">
    <location>
        <position position="452"/>
    </location>
    <ligand>
        <name>substrate</name>
    </ligand>
</feature>
<feature type="binding site" evidence="25">
    <location>
        <position position="509"/>
    </location>
    <ligand>
        <name>substrate</name>
    </ligand>
</feature>
<feature type="glycosylation site" description="N-linked (GlcNAc...) (high mannose) asparagine" evidence="10">
    <location>
        <position position="124"/>
    </location>
</feature>
<feature type="glycosylation site" description="N-linked (GlcNAc...) (high mannose) asparagine" evidence="4 10 14">
    <location>
        <position position="198"/>
    </location>
</feature>
<feature type="glycosylation site" description="N-linked (GlcNAc...) (high mannose) asparagine" evidence="4 10 14">
    <location>
        <position position="279"/>
    </location>
</feature>
<feature type="glycosylation site" description="N-linked (GlcNAc...) (high mannose) asparagine" evidence="4 10 14">
    <location>
        <position position="479"/>
    </location>
</feature>
<feature type="disulfide bond" evidence="4 14">
    <location>
        <begin position="167"/>
        <end position="409"/>
    </location>
</feature>
<feature type="disulfide bond" evidence="4 14">
    <location>
        <begin position="304"/>
        <end position="318"/>
    </location>
</feature>
<feature type="disulfide bond" evidence="4 14">
    <location>
        <begin position="328"/>
        <end position="351"/>
    </location>
</feature>
<feature type="disulfide bond" evidence="4 14">
    <location>
        <begin position="335"/>
        <end position="344"/>
    </location>
</feature>
<feature type="disulfide bond" evidence="4 14">
    <location>
        <begin position="373"/>
        <end position="379"/>
    </location>
</feature>
<feature type="mutagenesis site" description="Inactivates enzyme." evidence="15">
    <original>H</original>
    <variation>A</variation>
    <variation>R</variation>
    <location>
        <position position="508"/>
    </location>
</feature>
<feature type="sequence conflict" description="In Ref. 4; AA sequence." evidence="22" ref="4">
    <original>GH</original>
    <variation>HG</variation>
    <location>
        <begin position="260"/>
        <end position="261"/>
    </location>
</feature>
<feature type="sequence conflict" description="In Ref. 4; AA sequence." evidence="22" ref="4">
    <original>Y</original>
    <variation>E</variation>
    <location>
        <position position="389"/>
    </location>
</feature>
<feature type="sequence conflict" description="In Ref. 4; AA sequence." evidence="22" ref="4">
    <original>G</original>
    <variation>D</variation>
    <location>
        <position position="529"/>
    </location>
</feature>
<feature type="helix" evidence="27">
    <location>
        <begin position="116"/>
        <end position="118"/>
    </location>
</feature>
<feature type="strand" evidence="27">
    <location>
        <begin position="119"/>
        <end position="121"/>
    </location>
</feature>
<feature type="strand" evidence="27">
    <location>
        <begin position="129"/>
        <end position="134"/>
    </location>
</feature>
<feature type="turn" evidence="27">
    <location>
        <begin position="135"/>
        <end position="138"/>
    </location>
</feature>
<feature type="strand" evidence="27">
    <location>
        <begin position="139"/>
        <end position="146"/>
    </location>
</feature>
<feature type="turn" evidence="27">
    <location>
        <begin position="152"/>
        <end position="154"/>
    </location>
</feature>
<feature type="strand" evidence="27">
    <location>
        <begin position="157"/>
        <end position="161"/>
    </location>
</feature>
<feature type="turn" evidence="27">
    <location>
        <begin position="164"/>
        <end position="166"/>
    </location>
</feature>
<feature type="helix" evidence="27">
    <location>
        <begin position="170"/>
        <end position="173"/>
    </location>
</feature>
<feature type="turn" evidence="27">
    <location>
        <begin position="174"/>
        <end position="177"/>
    </location>
</feature>
<feature type="strand" evidence="27">
    <location>
        <begin position="178"/>
        <end position="183"/>
    </location>
</feature>
<feature type="turn" evidence="27">
    <location>
        <begin position="184"/>
        <end position="186"/>
    </location>
</feature>
<feature type="strand" evidence="27">
    <location>
        <begin position="187"/>
        <end position="190"/>
    </location>
</feature>
<feature type="helix" evidence="27">
    <location>
        <begin position="195"/>
        <end position="198"/>
    </location>
</feature>
<feature type="strand" evidence="27">
    <location>
        <begin position="199"/>
        <end position="202"/>
    </location>
</feature>
<feature type="strand" evidence="27">
    <location>
        <begin position="214"/>
        <end position="217"/>
    </location>
</feature>
<feature type="helix" evidence="27">
    <location>
        <begin position="224"/>
        <end position="240"/>
    </location>
</feature>
<feature type="helix" evidence="29">
    <location>
        <begin position="242"/>
        <end position="244"/>
    </location>
</feature>
<feature type="turn" evidence="27">
    <location>
        <begin position="245"/>
        <end position="248"/>
    </location>
</feature>
<feature type="strand" evidence="27">
    <location>
        <begin position="251"/>
        <end position="256"/>
    </location>
</feature>
<feature type="helix" evidence="27">
    <location>
        <begin position="259"/>
        <end position="270"/>
    </location>
</feature>
<feature type="strand" evidence="27">
    <location>
        <begin position="282"/>
        <end position="287"/>
    </location>
</feature>
<feature type="helix" evidence="27">
    <location>
        <begin position="292"/>
        <end position="295"/>
    </location>
</feature>
<feature type="helix" evidence="27">
    <location>
        <begin position="296"/>
        <end position="298"/>
    </location>
</feature>
<feature type="helix" evidence="27">
    <location>
        <begin position="299"/>
        <end position="303"/>
    </location>
</feature>
<feature type="strand" evidence="27">
    <location>
        <begin position="307"/>
        <end position="309"/>
    </location>
</feature>
<feature type="helix" evidence="27">
    <location>
        <begin position="315"/>
        <end position="338"/>
    </location>
</feature>
<feature type="helix" evidence="27">
    <location>
        <begin position="341"/>
        <end position="355"/>
    </location>
</feature>
<feature type="helix" evidence="27">
    <location>
        <begin position="357"/>
        <end position="362"/>
    </location>
</feature>
<feature type="strand" evidence="27">
    <location>
        <begin position="368"/>
        <end position="371"/>
    </location>
</feature>
<feature type="strand" evidence="27">
    <location>
        <begin position="375"/>
        <end position="377"/>
    </location>
</feature>
<feature type="helix" evidence="27">
    <location>
        <begin position="382"/>
        <end position="391"/>
    </location>
</feature>
<feature type="helix" evidence="27">
    <location>
        <begin position="393"/>
        <end position="398"/>
    </location>
</feature>
<feature type="strand" evidence="28">
    <location>
        <begin position="403"/>
        <end position="405"/>
    </location>
</feature>
<feature type="helix" evidence="27">
    <location>
        <begin position="411"/>
        <end position="418"/>
    </location>
</feature>
<feature type="turn" evidence="27">
    <location>
        <begin position="419"/>
        <end position="421"/>
    </location>
</feature>
<feature type="helix" evidence="27">
    <location>
        <begin position="422"/>
        <end position="424"/>
    </location>
</feature>
<feature type="helix" evidence="27">
    <location>
        <begin position="428"/>
        <end position="436"/>
    </location>
</feature>
<feature type="strand" evidence="27">
    <location>
        <begin position="441"/>
        <end position="446"/>
    </location>
</feature>
<feature type="helix" evidence="27">
    <location>
        <begin position="454"/>
        <end position="463"/>
    </location>
</feature>
<feature type="helix" evidence="27">
    <location>
        <begin position="469"/>
        <end position="474"/>
    </location>
</feature>
<feature type="strand" evidence="27">
    <location>
        <begin position="478"/>
        <end position="481"/>
    </location>
</feature>
<feature type="turn" evidence="27">
    <location>
        <begin position="483"/>
        <end position="485"/>
    </location>
</feature>
<feature type="strand" evidence="27">
    <location>
        <begin position="487"/>
        <end position="492"/>
    </location>
</feature>
<feature type="strand" evidence="27">
    <location>
        <begin position="498"/>
        <end position="503"/>
    </location>
</feature>
<feature type="helix" evidence="27">
    <location>
        <begin position="510"/>
        <end position="513"/>
    </location>
</feature>
<feature type="helix" evidence="27">
    <location>
        <begin position="515"/>
        <end position="526"/>
    </location>
</feature>
<feature type="turn" evidence="27">
    <location>
        <begin position="527"/>
        <end position="529"/>
    </location>
</feature>
<sequence>MKAFTSLLCGLGLSTTLAKAISLQRPLGLDKDVLLQAAEKFGLDLDLDHLLKELDSNVLDAWAQIEHLYPNQVMSLETSTKPKFPEAIKTKKDWDFVVKNDAIENYQLRVNKIKDPKILGIDPNVTQYTGYLDVEDEDKHFFFWTFESRNDPAKDPVILWLNGGPGCSSLTGLFFELGPSSIGPDLKPIGNPYSWNSNATVIFLDQPVNVGFSYSGSSGVSNTVAAGKDVYNFLELFFDQFPEYVNKGQDFHIAGESYAGHYIPVFASEILSHKDRNFNLTSVLIGNGLTDPLTQYNYYEPMACGEGGEPSVLPSEECSAMEDSLERCLGLIESCYDSQSVWSCVPATIYCNNAQLAPYQRTGRNVYDIRKDCEGGNLCYPTLQDIDDYLNQDYVKEAVGAEVDHYESCNFDINRNFLFAGDWMKPYHTAVTDLLNQDLPILVYAGDKDFICNWLGNKAWTDVLPWKYDEEFASQKVRNWTASITDEVAGEVKSYKHFTYLRVFNGGHMVPFDVPENALSMVNEWIHGGFSL</sequence>
<name>CBPY_YEAST</name>
<organism>
    <name type="scientific">Saccharomyces cerevisiae (strain ATCC 204508 / S288c)</name>
    <name type="common">Baker's yeast</name>
    <dbReference type="NCBI Taxonomy" id="559292"/>
    <lineage>
        <taxon>Eukaryota</taxon>
        <taxon>Fungi</taxon>
        <taxon>Dikarya</taxon>
        <taxon>Ascomycota</taxon>
        <taxon>Saccharomycotina</taxon>
        <taxon>Saccharomycetes</taxon>
        <taxon>Saccharomycetales</taxon>
        <taxon>Saccharomycetaceae</taxon>
        <taxon>Saccharomyces</taxon>
    </lineage>
</organism>
<protein>
    <recommendedName>
        <fullName evidence="21">Carboxypeptidase Y</fullName>
        <shortName evidence="20">CPD-Y</shortName>
        <shortName>cpY</shortName>
        <ecNumber evidence="5 16">3.4.16.5</ecNumber>
    </recommendedName>
    <alternativeName>
        <fullName>Carboxypeptidase YSCY</fullName>
    </alternativeName>
</protein>
<gene>
    <name evidence="19" type="primary">PRC1</name>
    <name evidence="26" type="ordered locus">YMR297W</name>
</gene>
<reference key="1">
    <citation type="journal article" date="1987" name="Cell">
        <title>Protein sorting in yeast: the localization determinant of yeast vacuolar carboxypeptidase Y resides in the propeptide.</title>
        <authorList>
            <person name="Valls L.A."/>
            <person name="Hunter C.P."/>
            <person name="Rothman J.H."/>
            <person name="Stevens T.H."/>
        </authorList>
    </citation>
    <scope>NUCLEOTIDE SEQUENCE [GENOMIC DNA]</scope>
</reference>
<reference key="2">
    <citation type="journal article" date="1997" name="Nature">
        <title>The nucleotide sequence of Saccharomyces cerevisiae chromosome XIII.</title>
        <authorList>
            <person name="Bowman S."/>
            <person name="Churcher C.M."/>
            <person name="Badcock K."/>
            <person name="Brown D."/>
            <person name="Chillingworth T."/>
            <person name="Connor R."/>
            <person name="Dedman K."/>
            <person name="Devlin K."/>
            <person name="Gentles S."/>
            <person name="Hamlin N."/>
            <person name="Hunt S."/>
            <person name="Jagels K."/>
            <person name="Lye G."/>
            <person name="Moule S."/>
            <person name="Odell C."/>
            <person name="Pearson D."/>
            <person name="Rajandream M.A."/>
            <person name="Rice P."/>
            <person name="Skelton J."/>
            <person name="Walsh S.V."/>
            <person name="Whitehead S."/>
            <person name="Barrell B.G."/>
        </authorList>
    </citation>
    <scope>NUCLEOTIDE SEQUENCE [LARGE SCALE GENOMIC DNA]</scope>
    <source>
        <strain>ATCC 204508 / S288c</strain>
    </source>
</reference>
<reference key="3">
    <citation type="journal article" date="2014" name="G3 (Bethesda)">
        <title>The reference genome sequence of Saccharomyces cerevisiae: Then and now.</title>
        <authorList>
            <person name="Engel S.R."/>
            <person name="Dietrich F.S."/>
            <person name="Fisk D.G."/>
            <person name="Binkley G."/>
            <person name="Balakrishnan R."/>
            <person name="Costanzo M.C."/>
            <person name="Dwight S.S."/>
            <person name="Hitz B.C."/>
            <person name="Karra K."/>
            <person name="Nash R.S."/>
            <person name="Weng S."/>
            <person name="Wong E.D."/>
            <person name="Lloyd P."/>
            <person name="Skrzypek M.S."/>
            <person name="Miyasato S.R."/>
            <person name="Simison M."/>
            <person name="Cherry J.M."/>
        </authorList>
    </citation>
    <scope>GENOME REANNOTATION</scope>
    <source>
        <strain>ATCC 204508 / S288c</strain>
    </source>
</reference>
<reference key="4">
    <citation type="journal article" date="1982" name="Carlsberg Res. Commun.">
        <title>Amino acid sequence of carboxypeptidase Y. I. Peptides from cleavage with cyanogen bromide.</title>
        <authorList>
            <person name="Martin B.M."/>
            <person name="Svendsen I."/>
            <person name="Viswanatha T."/>
            <person name="Johansen J.T."/>
        </authorList>
    </citation>
    <scope>PROTEIN SEQUENCE OF 112-532</scope>
</reference>
<reference key="5">
    <citation type="journal article" date="1984" name="Carlsberg Res. Commun.">
        <title>Identification of methionyl and cysteinyl residues in the substrate binding site of carboxypeptidase Y.</title>
        <authorList>
            <person name="Breddam K."/>
            <person name="Svendsen I."/>
        </authorList>
    </citation>
    <scope>SEQUENCE REVISION</scope>
    <scope>ACTIVE SITE SER-257</scope>
</reference>
<reference key="6">
    <citation type="journal article" date="1978" name="Eur. J. Biochem.">
        <title>Biosynthesis of the vacuolar yeast glycoprotein carboxypeptidase Y. Conversion of precursor into the enzyme.</title>
        <authorList>
            <person name="Hasilik A."/>
            <person name="Tanner W."/>
        </authorList>
    </citation>
    <scope>PROTEOLYTIC CLEAVAGE</scope>
</reference>
<reference key="7">
    <citation type="journal article" date="1989" name="Carlsberg Res. Commun.">
        <title>Inactivation of carboxypeptidase Y by mutational removal of the putative essential histidyl residue.</title>
        <authorList>
            <person name="Bech L.M."/>
            <person name="Breddam K."/>
        </authorList>
    </citation>
    <scope>ACTIVE SITE HIS-508</scope>
</reference>
<reference key="8">
    <citation type="journal article" date="1994" name="Biochemistry">
        <title>Site-directed mutagenesis on (serine) carboxypeptidase Y. A hydrogen bond network stabilizes the transition state by interaction with the C-terminal carboxylate group of the substrate.</title>
        <authorList>
            <person name="Mortensen U.H."/>
            <person name="Remington S.J."/>
            <person name="Breddam K."/>
        </authorList>
    </citation>
    <scope>MUTAGENESIS OF HIS-508</scope>
</reference>
<reference key="9">
    <citation type="journal article" date="1996" name="Biochemistry">
        <title>Studies on the hydrolytic properties of (serine) carboxypeptidase Y.</title>
        <authorList>
            <person name="Stennicke H.R."/>
            <person name="Mortensen U.H."/>
            <person name="Breddam K."/>
        </authorList>
    </citation>
    <scope>FUNCTION</scope>
    <scope>CATALYTIC ACTIVITY</scope>
    <scope>BIOPHYSICOCHEMICAL PROPERTIES</scope>
</reference>
<reference key="10">
    <citation type="journal article" date="2003" name="Nature">
        <title>Global analysis of protein localization in budding yeast.</title>
        <authorList>
            <person name="Huh W.-K."/>
            <person name="Falvo J.V."/>
            <person name="Gerke L.C."/>
            <person name="Carroll A.S."/>
            <person name="Howson R.W."/>
            <person name="Weissman J.S."/>
            <person name="O'Shea E.K."/>
        </authorList>
    </citation>
    <scope>SUBCELLULAR LOCATION [LARGE SCALE ANALYSIS]</scope>
</reference>
<reference key="11">
    <citation type="journal article" date="2003" name="Nature">
        <title>Global analysis of protein expression in yeast.</title>
        <authorList>
            <person name="Ghaemmaghami S."/>
            <person name="Huh W.-K."/>
            <person name="Bower K."/>
            <person name="Howson R.W."/>
            <person name="Belle A."/>
            <person name="Dephoure N."/>
            <person name="O'Shea E.K."/>
            <person name="Weissman J.S."/>
        </authorList>
    </citation>
    <scope>LEVEL OF PROTEIN EXPRESSION [LARGE SCALE ANALYSIS]</scope>
</reference>
<reference key="12">
    <citation type="journal article" date="2007" name="FEBS Lett.">
        <title>Phytochelatins are synthesized by two vacuolar serine carboxypeptidases in Saccharomyces cerevisiae.</title>
        <authorList>
            <person name="Wuenschmann J."/>
            <person name="Beck A."/>
            <person name="Meyer L."/>
            <person name="Letzel T."/>
            <person name="Grill E."/>
            <person name="Lendzian K.J."/>
        </authorList>
    </citation>
    <scope>FUNCTION</scope>
    <scope>DISRUPTION PHENOTYPE</scope>
    <scope>CATALYTIC ACTIVITY</scope>
</reference>
<reference key="13">
    <citation type="journal article" date="2010" name="Phytochemistry">
        <title>Dissection of glutathione conjugate turnover in yeast.</title>
        <authorList>
            <person name="Wuenschmann J."/>
            <person name="Krajewski M."/>
            <person name="Letzel T."/>
            <person name="Huber E.M."/>
            <person name="Ehrmann A."/>
            <person name="Grill E."/>
            <person name="Lendzian K.J."/>
        </authorList>
    </citation>
    <scope>FUNCTION</scope>
    <scope>DISRUPTION PHENOTYPE</scope>
</reference>
<reference key="14">
    <citation type="journal article" date="2013" name="Protoplasma">
        <title>Organelle acidification is important for localisation of vacuolar proteins in Saccharomyces cerevisiae.</title>
        <authorList>
            <person name="Matsumoto R."/>
            <person name="Suzuki K."/>
            <person name="Ohya Y."/>
        </authorList>
    </citation>
    <scope>SUBCELLULAR LOCATION</scope>
</reference>
<reference key="15">
    <citation type="journal article" date="2015" name="Biotechnol. Lett.">
        <title>High-level expression and characterization of carboxypeptidase Y from Saccharomyces cerevisiae in Pichia pastoris GS115.</title>
        <authorList>
            <person name="Yu X."/>
            <person name="Zhai C."/>
            <person name="Zhong X."/>
            <person name="Tang W."/>
            <person name="Wang X."/>
            <person name="Yang H."/>
            <person name="Chen W."/>
            <person name="Ma L."/>
        </authorList>
    </citation>
    <scope>BIOPHYSICOCHEMICAL PROPERTIES</scope>
</reference>
<reference key="16">
    <citation type="journal article" date="2017" name="Int. J. Biol. Macromol.">
        <title>N-glycosylation analysis of yeast carboxypeptidase Y reveals the ultimate removal of phosphate from glycans at Asn(368).</title>
        <authorList>
            <person name="Gnanesch Kumar B.S."/>
            <person name="Surolia A."/>
        </authorList>
    </citation>
    <scope>GLYCOSYLATION AT ASN-124; ASN-198; ASN-279 AND ASN-479</scope>
</reference>
<reference key="17">
    <citation type="journal article" date="2018" name="Mol. Biol. Cell">
        <title>A newly characterized vacuolar serine carboxypeptidase, Atg42/Ybr139w, is required for normal vacuole function and the terminal steps of autophagy in the yeast Saccharomyces cerevisiae.</title>
        <authorList>
            <person name="Parzych K.R."/>
            <person name="Ariosa A."/>
            <person name="Mari M."/>
            <person name="Klionsky D.J."/>
        </authorList>
    </citation>
    <scope>FUNCTION</scope>
    <scope>SUBCELLULAR LOCATION</scope>
    <scope>DISRUPTION PHENOTYPE</scope>
</reference>
<reference key="18">
    <citation type="journal article" date="1994" name="Biochemistry">
        <title>2.8-A structure of yeast serine carboxypeptidase.</title>
        <authorList>
            <person name="Endrizzi J.A."/>
            <person name="Breddam K."/>
            <person name="Remington S.J."/>
        </authorList>
    </citation>
    <scope>X-RAY CRYSTALLOGRAPHY (2.80 ANGSTROMS) OF 112-532</scope>
    <scope>GLYCOSYLATION AT ASN-198; ASN-279 AND ASN-479</scope>
    <scope>DISULFIDE BONDS</scope>
</reference>
<reference key="19">
    <citation type="journal article" date="2005" name="J. Mol. Biol.">
        <title>Structure of the carboxypeptidase Y inhibitor IC in complex with the cognate proteinase reveals a novel mode of the proteinase-protein inhibitor interaction.</title>
        <authorList>
            <person name="Mima J."/>
            <person name="Hayashida M."/>
            <person name="Fujii T."/>
            <person name="Narita Y."/>
            <person name="Hayashi R."/>
            <person name="Ueda M."/>
            <person name="Hata Y."/>
        </authorList>
    </citation>
    <scope>X-RAY CRYSTALLOGRAPHY (2.70 ANGSTROMS) OF 112-532</scope>
    <scope>GLYCOSYLATION AT ASN-198; ASN-279 AND ASN-479</scope>
    <scope>DISULFIDE BONDS</scope>
</reference>
<keyword id="KW-0002">3D-structure</keyword>
<keyword id="KW-0121">Carboxypeptidase</keyword>
<keyword id="KW-0903">Direct protein sequencing</keyword>
<keyword id="KW-1015">Disulfide bond</keyword>
<keyword id="KW-0325">Glycoprotein</keyword>
<keyword id="KW-0378">Hydrolase</keyword>
<keyword id="KW-0645">Protease</keyword>
<keyword id="KW-1185">Reference proteome</keyword>
<keyword id="KW-0732">Signal</keyword>
<keyword id="KW-0926">Vacuole</keyword>
<keyword id="KW-0865">Zymogen</keyword>
<proteinExistence type="evidence at protein level"/>
<accession>P00729</accession>
<accession>D6W0C4</accession>
<dbReference type="EC" id="3.4.16.5" evidence="5 16"/>
<dbReference type="EMBL" id="M15482">
    <property type="protein sequence ID" value="AAA34902.1"/>
    <property type="molecule type" value="Genomic_DNA"/>
</dbReference>
<dbReference type="EMBL" id="X80836">
    <property type="protein sequence ID" value="CAA56806.1"/>
    <property type="molecule type" value="Genomic_DNA"/>
</dbReference>
<dbReference type="EMBL" id="BK006946">
    <property type="protein sequence ID" value="DAA10198.1"/>
    <property type="molecule type" value="Genomic_DNA"/>
</dbReference>
<dbReference type="PIR" id="A26597">
    <property type="entry name" value="CPBYY"/>
</dbReference>
<dbReference type="RefSeq" id="NP_014026.1">
    <property type="nucleotide sequence ID" value="NM_001182806.1"/>
</dbReference>
<dbReference type="PDB" id="1CPY">
    <property type="method" value="X-ray"/>
    <property type="resolution" value="2.60 A"/>
    <property type="chains" value="A=112-532"/>
</dbReference>
<dbReference type="PDB" id="1WPX">
    <property type="method" value="X-ray"/>
    <property type="resolution" value="2.70 A"/>
    <property type="chains" value="A=112-532"/>
</dbReference>
<dbReference type="PDB" id="1YSC">
    <property type="method" value="X-ray"/>
    <property type="resolution" value="2.80 A"/>
    <property type="chains" value="A=112-532"/>
</dbReference>
<dbReference type="PDBsum" id="1CPY"/>
<dbReference type="PDBsum" id="1WPX"/>
<dbReference type="PDBsum" id="1YSC"/>
<dbReference type="SMR" id="P00729"/>
<dbReference type="BioGRID" id="35477">
    <property type="interactions" value="89"/>
</dbReference>
<dbReference type="DIP" id="DIP-2394N"/>
<dbReference type="FunCoup" id="P00729">
    <property type="interactions" value="1075"/>
</dbReference>
<dbReference type="IntAct" id="P00729">
    <property type="interactions" value="19"/>
</dbReference>
<dbReference type="MINT" id="P00729"/>
<dbReference type="STRING" id="4932.YMR297W"/>
<dbReference type="ChEMBL" id="CHEMBL4295562"/>
<dbReference type="Allergome" id="8267">
    <property type="allergen name" value="Sac c Carboxypeptidase Y"/>
</dbReference>
<dbReference type="ESTHER" id="yeast-cbpy1">
    <property type="family name" value="Carboxypeptidase_S10"/>
</dbReference>
<dbReference type="MEROPS" id="S10.001"/>
<dbReference type="GlyCosmos" id="P00729">
    <property type="glycosylation" value="4 sites, No reported glycans"/>
</dbReference>
<dbReference type="GlyGen" id="P00729">
    <property type="glycosylation" value="4 sites"/>
</dbReference>
<dbReference type="iPTMnet" id="P00729"/>
<dbReference type="PaxDb" id="4932-YMR297W"/>
<dbReference type="PeptideAtlas" id="P00729"/>
<dbReference type="EnsemblFungi" id="YMR297W_mRNA">
    <property type="protein sequence ID" value="YMR297W"/>
    <property type="gene ID" value="YMR297W"/>
</dbReference>
<dbReference type="GeneID" id="855343"/>
<dbReference type="KEGG" id="sce:YMR297W"/>
<dbReference type="AGR" id="SGD:S000004912"/>
<dbReference type="SGD" id="S000004912">
    <property type="gene designation" value="PRC1"/>
</dbReference>
<dbReference type="VEuPathDB" id="FungiDB:YMR297W"/>
<dbReference type="eggNOG" id="KOG1282">
    <property type="taxonomic scope" value="Eukaryota"/>
</dbReference>
<dbReference type="GeneTree" id="ENSGT00960000189236"/>
<dbReference type="HOGENOM" id="CLU_008523_10_4_1"/>
<dbReference type="InParanoid" id="P00729"/>
<dbReference type="OMA" id="GDWMKPF"/>
<dbReference type="OrthoDB" id="443318at2759"/>
<dbReference type="BioCyc" id="MetaCyc:YMR297W-MONOMER"/>
<dbReference type="BioCyc" id="YEAST:YMR297W-MONOMER"/>
<dbReference type="BRENDA" id="3.4.16.5">
    <property type="organism ID" value="984"/>
</dbReference>
<dbReference type="BioGRID-ORCS" id="855343">
    <property type="hits" value="2 hits in 10 CRISPR screens"/>
</dbReference>
<dbReference type="EvolutionaryTrace" id="P00729"/>
<dbReference type="PRO" id="PR:P00729"/>
<dbReference type="Proteomes" id="UP000002311">
    <property type="component" value="Chromosome XIII"/>
</dbReference>
<dbReference type="RNAct" id="P00729">
    <property type="molecule type" value="protein"/>
</dbReference>
<dbReference type="GO" id="GO:0005737">
    <property type="term" value="C:cytoplasm"/>
    <property type="evidence" value="ECO:0007005"/>
    <property type="project" value="SGD"/>
</dbReference>
<dbReference type="GO" id="GO:0005783">
    <property type="term" value="C:endoplasmic reticulum"/>
    <property type="evidence" value="ECO:0007005"/>
    <property type="project" value="SGD"/>
</dbReference>
<dbReference type="GO" id="GO:0005576">
    <property type="term" value="C:extracellular region"/>
    <property type="evidence" value="ECO:0000314"/>
    <property type="project" value="CAFA"/>
</dbReference>
<dbReference type="GO" id="GO:0000324">
    <property type="term" value="C:fungal-type vacuole"/>
    <property type="evidence" value="ECO:0000314"/>
    <property type="project" value="SGD"/>
</dbReference>
<dbReference type="GO" id="GO:0000328">
    <property type="term" value="C:fungal-type vacuole lumen"/>
    <property type="evidence" value="ECO:0000314"/>
    <property type="project" value="SGD"/>
</dbReference>
<dbReference type="GO" id="GO:0005775">
    <property type="term" value="C:vacuolar lumen"/>
    <property type="evidence" value="ECO:0000315"/>
    <property type="project" value="SGD"/>
</dbReference>
<dbReference type="GO" id="GO:0004185">
    <property type="term" value="F:serine-type carboxypeptidase activity"/>
    <property type="evidence" value="ECO:0000314"/>
    <property type="project" value="SGD"/>
</dbReference>
<dbReference type="GO" id="GO:0006995">
    <property type="term" value="P:cellular response to nitrogen starvation"/>
    <property type="evidence" value="ECO:0000315"/>
    <property type="project" value="SGD"/>
</dbReference>
<dbReference type="GO" id="GO:0016236">
    <property type="term" value="P:macroautophagy"/>
    <property type="evidence" value="ECO:0000316"/>
    <property type="project" value="SGD"/>
</dbReference>
<dbReference type="GO" id="GO:0046938">
    <property type="term" value="P:phytochelatin biosynthetic process"/>
    <property type="evidence" value="ECO:0000314"/>
    <property type="project" value="SGD"/>
</dbReference>
<dbReference type="GO" id="GO:0031638">
    <property type="term" value="P:zymogen activation"/>
    <property type="evidence" value="ECO:0000316"/>
    <property type="project" value="SGD"/>
</dbReference>
<dbReference type="FunFam" id="1.10.287.410:FF:000001">
    <property type="entry name" value="Carboxypeptidase Y"/>
    <property type="match status" value="1"/>
</dbReference>
<dbReference type="Gene3D" id="1.10.287.410">
    <property type="match status" value="1"/>
</dbReference>
<dbReference type="Gene3D" id="3.40.50.1820">
    <property type="entry name" value="alpha/beta hydrolase"/>
    <property type="match status" value="1"/>
</dbReference>
<dbReference type="InterPro" id="IPR029058">
    <property type="entry name" value="AB_hydrolase_fold"/>
</dbReference>
<dbReference type="InterPro" id="IPR001563">
    <property type="entry name" value="Peptidase_S10"/>
</dbReference>
<dbReference type="InterPro" id="IPR008442">
    <property type="entry name" value="Propeptide_carboxypepY"/>
</dbReference>
<dbReference type="InterPro" id="IPR033124">
    <property type="entry name" value="Ser_caboxypep_his_AS"/>
</dbReference>
<dbReference type="InterPro" id="IPR018202">
    <property type="entry name" value="Ser_caboxypep_ser_AS"/>
</dbReference>
<dbReference type="PANTHER" id="PTHR11802:SF113">
    <property type="entry name" value="SERINE CARBOXYPEPTIDASE CTSA-4.1"/>
    <property type="match status" value="1"/>
</dbReference>
<dbReference type="PANTHER" id="PTHR11802">
    <property type="entry name" value="SERINE PROTEASE FAMILY S10 SERINE CARBOXYPEPTIDASE"/>
    <property type="match status" value="1"/>
</dbReference>
<dbReference type="Pfam" id="PF05388">
    <property type="entry name" value="Carbpep_Y_N"/>
    <property type="match status" value="1"/>
</dbReference>
<dbReference type="Pfam" id="PF00450">
    <property type="entry name" value="Peptidase_S10"/>
    <property type="match status" value="1"/>
</dbReference>
<dbReference type="PRINTS" id="PR00724">
    <property type="entry name" value="CRBOXYPTASEC"/>
</dbReference>
<dbReference type="SUPFAM" id="SSF53474">
    <property type="entry name" value="alpha/beta-Hydrolases"/>
    <property type="match status" value="1"/>
</dbReference>
<dbReference type="PROSITE" id="PS00560">
    <property type="entry name" value="CARBOXYPEPT_SER_HIS"/>
    <property type="match status" value="1"/>
</dbReference>
<dbReference type="PROSITE" id="PS00131">
    <property type="entry name" value="CARBOXYPEPT_SER_SER"/>
    <property type="match status" value="1"/>
</dbReference>